<feature type="chain" id="PRO_0000047371" description="Transcription factor HIVEP2">
    <location>
        <begin position="1"/>
        <end position="2446"/>
    </location>
</feature>
<feature type="repeat" description="1">
    <location>
        <begin position="2053"/>
        <end position="2056"/>
    </location>
</feature>
<feature type="repeat" description="2">
    <location>
        <begin position="2059"/>
        <end position="2062"/>
    </location>
</feature>
<feature type="repeat" description="3">
    <location>
        <begin position="2071"/>
        <end position="2074"/>
    </location>
</feature>
<feature type="repeat" description="4">
    <location>
        <begin position="2083"/>
        <end position="2086"/>
    </location>
</feature>
<feature type="repeat" description="5">
    <location>
        <begin position="2089"/>
        <end position="2092"/>
    </location>
</feature>
<feature type="repeat" description="6">
    <location>
        <begin position="2106"/>
        <end position="2109"/>
    </location>
</feature>
<feature type="repeat" description="7">
    <location>
        <begin position="2112"/>
        <end position="2115"/>
    </location>
</feature>
<feature type="repeat" description="8">
    <location>
        <begin position="2118"/>
        <end position="2121"/>
    </location>
</feature>
<feature type="repeat" description="9">
    <location>
        <begin position="2130"/>
        <end position="2133"/>
    </location>
</feature>
<feature type="repeat" description="10">
    <location>
        <begin position="2145"/>
        <end position="2148"/>
    </location>
</feature>
<feature type="zinc finger region" description="C2H2-type 1" evidence="5">
    <location>
        <begin position="189"/>
        <end position="211"/>
    </location>
</feature>
<feature type="zinc finger region" description="C2H2-type 2" evidence="5">
    <location>
        <begin position="217"/>
        <end position="239"/>
    </location>
</feature>
<feature type="zinc finger region" description="C2H2-type 3" evidence="5">
    <location>
        <begin position="1799"/>
        <end position="1821"/>
    </location>
</feature>
<feature type="zinc finger region" description="C2H2-type 4" evidence="5">
    <location>
        <begin position="1827"/>
        <end position="1851"/>
    </location>
</feature>
<feature type="region of interest" description="Disordered" evidence="6">
    <location>
        <begin position="1"/>
        <end position="93"/>
    </location>
</feature>
<feature type="region of interest" description="Disordered" evidence="6">
    <location>
        <begin position="272"/>
        <end position="303"/>
    </location>
</feature>
<feature type="region of interest" description="Disordered" evidence="6">
    <location>
        <begin position="340"/>
        <end position="416"/>
    </location>
</feature>
<feature type="region of interest" description="Disordered" evidence="6">
    <location>
        <begin position="543"/>
        <end position="563"/>
    </location>
</feature>
<feature type="region of interest" description="Disordered" evidence="6">
    <location>
        <begin position="751"/>
        <end position="985"/>
    </location>
</feature>
<feature type="region of interest" description="Disordered" evidence="6">
    <location>
        <begin position="1485"/>
        <end position="1603"/>
    </location>
</feature>
<feature type="region of interest" description="Disordered" evidence="6">
    <location>
        <begin position="1882"/>
        <end position="1951"/>
    </location>
</feature>
<feature type="region of interest" description="Disordered" evidence="6">
    <location>
        <begin position="2024"/>
        <end position="2129"/>
    </location>
</feature>
<feature type="region of interest" description="10 X 4 AA tandem repeats of S-P-[RGMKC]-[RK]">
    <location>
        <begin position="2053"/>
        <end position="2148"/>
    </location>
</feature>
<feature type="region of interest" description="Disordered" evidence="6">
    <location>
        <begin position="2242"/>
        <end position="2325"/>
    </location>
</feature>
<feature type="region of interest" description="Disordered" evidence="6">
    <location>
        <begin position="2371"/>
        <end position="2403"/>
    </location>
</feature>
<feature type="region of interest" description="Disordered" evidence="6">
    <location>
        <begin position="2423"/>
        <end position="2446"/>
    </location>
</feature>
<feature type="short sequence motif" description="Nuclear localization signal" evidence="4">
    <location>
        <begin position="937"/>
        <end position="943"/>
    </location>
</feature>
<feature type="compositionally biased region" description="Basic and acidic residues" evidence="6">
    <location>
        <begin position="17"/>
        <end position="28"/>
    </location>
</feature>
<feature type="compositionally biased region" description="Polar residues" evidence="6">
    <location>
        <begin position="381"/>
        <end position="416"/>
    </location>
</feature>
<feature type="compositionally biased region" description="Polar residues" evidence="6">
    <location>
        <begin position="543"/>
        <end position="556"/>
    </location>
</feature>
<feature type="compositionally biased region" description="Basic and acidic residues" evidence="6">
    <location>
        <begin position="751"/>
        <end position="760"/>
    </location>
</feature>
<feature type="compositionally biased region" description="Polar residues" evidence="6">
    <location>
        <begin position="766"/>
        <end position="777"/>
    </location>
</feature>
<feature type="compositionally biased region" description="Basic and acidic residues" evidence="6">
    <location>
        <begin position="782"/>
        <end position="791"/>
    </location>
</feature>
<feature type="compositionally biased region" description="Polar residues" evidence="6">
    <location>
        <begin position="800"/>
        <end position="812"/>
    </location>
</feature>
<feature type="compositionally biased region" description="Low complexity" evidence="6">
    <location>
        <begin position="863"/>
        <end position="878"/>
    </location>
</feature>
<feature type="compositionally biased region" description="Basic and acidic residues" evidence="6">
    <location>
        <begin position="892"/>
        <end position="916"/>
    </location>
</feature>
<feature type="compositionally biased region" description="Low complexity" evidence="6">
    <location>
        <begin position="952"/>
        <end position="982"/>
    </location>
</feature>
<feature type="compositionally biased region" description="Low complexity" evidence="6">
    <location>
        <begin position="1510"/>
        <end position="1533"/>
    </location>
</feature>
<feature type="compositionally biased region" description="Low complexity" evidence="6">
    <location>
        <begin position="1576"/>
        <end position="1586"/>
    </location>
</feature>
<feature type="compositionally biased region" description="Acidic residues" evidence="6">
    <location>
        <begin position="1899"/>
        <end position="1925"/>
    </location>
</feature>
<feature type="compositionally biased region" description="Low complexity" evidence="6">
    <location>
        <begin position="2029"/>
        <end position="2053"/>
    </location>
</feature>
<feature type="compositionally biased region" description="Basic and acidic residues" evidence="6">
    <location>
        <begin position="2078"/>
        <end position="2107"/>
    </location>
</feature>
<feature type="compositionally biased region" description="Polar residues" evidence="6">
    <location>
        <begin position="2307"/>
        <end position="2317"/>
    </location>
</feature>
<feature type="compositionally biased region" description="Basic and acidic residues" evidence="6">
    <location>
        <begin position="2387"/>
        <end position="2396"/>
    </location>
</feature>
<feature type="compositionally biased region" description="Basic and acidic residues" evidence="6">
    <location>
        <begin position="2433"/>
        <end position="2446"/>
    </location>
</feature>
<feature type="modified residue" description="Phosphoserine" evidence="2">
    <location>
        <position position="819"/>
    </location>
</feature>
<feature type="modified residue" description="Phosphoserine" evidence="3">
    <location>
        <position position="950"/>
    </location>
</feature>
<feature type="modified residue" description="Phosphoserine" evidence="3">
    <location>
        <position position="955"/>
    </location>
</feature>
<feature type="modified residue" description="Phosphoserine" evidence="3">
    <location>
        <position position="1048"/>
    </location>
</feature>
<feature type="modified residue" description="Phosphoserine" evidence="3">
    <location>
        <position position="1443"/>
    </location>
</feature>
<feature type="modified residue" description="Phosphoserine" evidence="3">
    <location>
        <position position="1447"/>
    </location>
</feature>
<feature type="modified residue" description="Phosphoserine" evidence="14">
    <location>
        <position position="2118"/>
    </location>
</feature>
<feature type="modified residue" description="Phosphoserine" evidence="14">
    <location>
        <position position="2297"/>
    </location>
</feature>
<feature type="modified residue" description="Phosphoserine" evidence="14">
    <location>
        <position position="2301"/>
    </location>
</feature>
<feature type="modified residue" description="Phosphoserine" evidence="3">
    <location>
        <position position="2429"/>
    </location>
</feature>
<feature type="modified residue" description="Phosphoserine" evidence="3">
    <location>
        <position position="2431"/>
    </location>
</feature>
<feature type="sequence variant" id="VAR_052754" description="In dbSNP:rs17072013.">
    <original>R</original>
    <variation>Q</variation>
    <location>
        <position position="46"/>
    </location>
</feature>
<feature type="sequence variant" id="VAR_052755" description="In dbSNP:rs34875559.">
    <original>A</original>
    <variation>V</variation>
    <location>
        <position position="1041"/>
    </location>
</feature>
<feature type="sequence variant" id="VAR_052756" description="In dbSNP:rs35675714.">
    <original>L</original>
    <variation>I</variation>
    <location>
        <position position="1293"/>
    </location>
</feature>
<feature type="sequence variant" id="VAR_052757" description="In dbSNP:rs109836." evidence="8 9 12">
    <original>L</original>
    <variation>P</variation>
    <location>
        <position position="1538"/>
    </location>
</feature>
<feature type="sequence conflict" description="In Ref. 2; CAA46596." evidence="13" ref="2">
    <original>R</original>
    <variation>T</variation>
    <location>
        <position position="2091"/>
    </location>
</feature>
<proteinExistence type="evidence at protein level"/>
<protein>
    <recommendedName>
        <fullName>Transcription factor HIVEP2</fullName>
    </recommendedName>
    <alternativeName>
        <fullName>Human immunodeficiency virus type I enhancer-binding protein 2</fullName>
        <shortName>HIV-EP2</shortName>
    </alternativeName>
    <alternativeName>
        <fullName>MHC-binding protein 2</fullName>
        <shortName>MBP-2</shortName>
    </alternativeName>
</protein>
<sequence>MDTGDTALGQKATSRSGETDKASGRWRQEQSAVIKMSTFGSHEGQRQPQIEPEQIGNTASAQLFGSGKLASPSEVVQQVAEKQYPPHRPSPYSCQHSLSFPQHSLPQGVMHSTKPHQSLEGPPWLFPGPLPSVASEDLFPFPIHGHSGGYPRKKISSLNPAYSQYSQKSIEQAEEAHKKEHKPKKPGKYICPYCSRACAKPSVLKKHIRSHTGERPYPCIPCGFSFKTKSNLYKHRKSHAHAIKAGLVPFTESAVSKLDLEAGFIDVEAEIHSDGEQSTDTDEESSLFAEASDKMSPGPPIPLDIASRGGYHGSLEESLGGPMKVPILIIPKSGIPLPNESSQYIGPDMLPNPSLNTKADDSHTVKQKLALRLSEKKGQDSEPSLNLLSPHSKGSTDSGYFSRSESAEQQISPPNTNAKSYEEIIFGKYCRLSPRNALSVTTTSQERAAMGRKGIMEPLPHVNTRLDVKMFEDPVSQLIPSKGDVDPSQTSMLKSTKFNSESRQPQIIPSSIRNEGKLYPANFQGSNPVLLEAPVDSSPLIRSNSVPTSSATNLTIPPSLRGSHSFDERMTGSDDVFYPGTVGIPPQRMLRRQAAFELPSVQEGHVEVEHHGRMLKGISSSSLKEKKLSPGDRVGYDYDVCRKPYKKWEDSETPKQNYRDISCLSSLKHGGEYFMDPVVPLQGVPSMFGTTCENRKRRKEKSVGDEEDTPMICSSIVSTPVGIMASDYDPKLQMQEGVRSGFAMAGHENLSHGHTERFDPCRPQLQPGSPSLVSEESPSAIDSDKMSDLGGRKPPGNVISVIQHTNSLSRPNSFERSESAELVACTQDKAPSPSETCDSEISEAPVSPEWAPPGDGAESGGKPSPSQQVQQQSYHTQPRLVRQHNIQVPEIRVTEEPDKPEKEKEAQSKEPEKPVEEFQWPQRSETLSQLPAEKLPPKKKRLRLADMEHSSGESSFESTGTGLSRSPSQESNLSHSSSFSMSFEREETSKLSALPKQDEFGKHSEFLTVPAGSYSLSVPGHHHQKEMRRCSSEQMPCPHPAEVPEVRSKSFDYGNLSHAPVSGAAASTVSPSRERKKCFLVRQASFSGSPEISQGEVGMDQSVKQEQLEHLHAGLRSGWHHGPPAVLPPLQQEDPGKQVAGPCPPLSSGPLHLAQPQIMHMDSQESLRNPLIQPTSYMTSKHLPEQPHLFPHQETIPFSPIQNALFQFQYPTVCMVHLPAQQPPWWQAHFPHPFAQHPQKSYGKPSFQTEIHSSYPLEHVAEHTGKKPAEYAHTKEQTYPCYSGASGLHPKNLLPKFPSDQSSKSTETPSEQVLQEDFASANAGSLQSLPGTVVPVRIQTHVPSYGSVMYTSISQILGQNSPAIVICKVDENMTQRTLVTNAAMQGIGFNIAQVLGQHAGLEKYPIWKAPQTLPLGLESSIPLCLPSTSDSVATLGGSKRMLSPASSLELFMETKQQKRVKEEKMYGQIVEELSAVELTNSDIKKDLSRPQKPQLVRQGCASEPKDGLQSGSSSFSSLSPSSSQDYPSVSPSSREPFLPSKEMLSGSRAPLPGQKSSGPSESKESSDELDIDETASDMSMSPQSSSLPAGDGQLEEEGKGHKRPVGMLVRMASAPSGNVADSTLLLTDMADFQQILQFPSLRTTTTVSWCFLNYTKPNYVQQATFKSSVYASWCISSCNPNPSGLNTKTTLALLRSKQKITAEIYTLAAMHRPGTGKLTSSSAWKQFTQMKPDASFLFGSKLERKLVGNILKERGKGDIHGDKDIGSKQTEPIRIKIFEGGYKSNEDYVYVRGRGRGKYICEECGIRCKKPSMLKKHIRTHTDVRPYVCKLCNFAFKTKGNLTKHMKSKAHMKKCLELGVSMTSVDDTETEEAENLEDLHKAAEKHSMSSISTDHQFSDAEESDGEDGDDNDDDDEDEDDFDDQGDLTPKTRSRSTSPQPPRFSSLPVNVGAVPHGVPSDSSLGHSSLISYLVTLPSIRVTQLMTPSDSCEDTQMTEYQRLFQSKSTDSEPDKDRLDIPSCMDEECMLPSEPSSSPRDFSPSSHHSSPGYDSSPCRDNSPKRYLIPKGDLSPRRHLSPRRDLSPMRHLSPRKEAALRREMSQRDVSPRRHLSPRRPVSPGKDITARRDLSPRRERRYMTTIRAPSPRRALYHNPPLSMGQYLQAEPIVLGPPNLRRGLPQVPYFSLYGDQEGAYEHPGSSLFPEGPNDYVFSHLPLHSQQQVRAPIPMVPVGGIQMVHSMPPALSSLHPSPTLPLPMEGFEEKKGASGESFSKDPYVLSKQHEKRGPHALQSSGPPSTPSSPRLLMKQSTSEDSLNATEREQEENIQTCTKAIASLRIATEEAALLGPDQPARVQEPHQNPLGSAHVSIRHFSRPEPGQPCTSATHPDLHDGEKDNFGTSQTPLAHSTFYSKSCVDDKQLDFHSSKELSSSTEESKDPSSEKSQLH</sequence>
<reference key="1">
    <citation type="journal article" date="1991" name="J. Biol. Chem.">
        <title>HIV-EP2, a new member of the gene family encoding the human immunodeficiency virus type 1 enhancer-binding protein. Comparison with HIV-EP1/PRDII-BF1/MBP-1.</title>
        <authorList>
            <person name="Nomura N."/>
            <person name="Zhao M.-J."/>
            <person name="Nagase T."/>
            <person name="Maekawa T."/>
            <person name="Ishizaki R."/>
            <person name="Tabata S."/>
            <person name="Ishii S."/>
        </authorList>
    </citation>
    <scope>NUCLEOTIDE SEQUENCE [GENOMIC DNA]</scope>
    <scope>VARIANT PRO-1538</scope>
</reference>
<reference key="2">
    <citation type="journal article" date="1992" name="Proc. Natl. Acad. Sci. U.S.A.">
        <title>Structure and expression of MBP-2: a 275 kDa zinc finger protein that binds to an enhancer of major histocompatibility complex class 1 genes.</title>
        <authorList>
            <person name="Van't Veer L.J."/>
            <person name="Lutz P."/>
            <person name="Isselbacher K.J."/>
            <person name="Bernards R."/>
        </authorList>
    </citation>
    <scope>NUCLEOTIDE SEQUENCE [MRNA]</scope>
    <scope>VARIANT PRO-1538</scope>
</reference>
<reference key="3">
    <citation type="submission" date="1999-05" db="EMBL/GenBank/DDBJ databases">
        <title>Characterization of the human MBP-2/HIV-EP2 gene: identification of multiple promoters and alternative splicing of 5' untranslated region.</title>
        <authorList>
            <person name="Kukita Y."/>
            <person name="Komiya T."/>
            <person name="Tahira T."/>
            <person name="Asakawa S."/>
            <person name="Shimizu N."/>
            <person name="Suzuki Y."/>
            <person name="Sugano S."/>
            <person name="Hayashi K."/>
        </authorList>
    </citation>
    <scope>NUCLEOTIDE SEQUENCE [GENOMIC DNA]</scope>
    <scope>VARIANT PRO-1538</scope>
</reference>
<reference key="4">
    <citation type="journal article" date="2003" name="Nature">
        <title>The DNA sequence and analysis of human chromosome 6.</title>
        <authorList>
            <person name="Mungall A.J."/>
            <person name="Palmer S.A."/>
            <person name="Sims S.K."/>
            <person name="Edwards C.A."/>
            <person name="Ashurst J.L."/>
            <person name="Wilming L."/>
            <person name="Jones M.C."/>
            <person name="Horton R."/>
            <person name="Hunt S.E."/>
            <person name="Scott C.E."/>
            <person name="Gilbert J.G.R."/>
            <person name="Clamp M.E."/>
            <person name="Bethel G."/>
            <person name="Milne S."/>
            <person name="Ainscough R."/>
            <person name="Almeida J.P."/>
            <person name="Ambrose K.D."/>
            <person name="Andrews T.D."/>
            <person name="Ashwell R.I.S."/>
            <person name="Babbage A.K."/>
            <person name="Bagguley C.L."/>
            <person name="Bailey J."/>
            <person name="Banerjee R."/>
            <person name="Barker D.J."/>
            <person name="Barlow K.F."/>
            <person name="Bates K."/>
            <person name="Beare D.M."/>
            <person name="Beasley H."/>
            <person name="Beasley O."/>
            <person name="Bird C.P."/>
            <person name="Blakey S.E."/>
            <person name="Bray-Allen S."/>
            <person name="Brook J."/>
            <person name="Brown A.J."/>
            <person name="Brown J.Y."/>
            <person name="Burford D.C."/>
            <person name="Burrill W."/>
            <person name="Burton J."/>
            <person name="Carder C."/>
            <person name="Carter N.P."/>
            <person name="Chapman J.C."/>
            <person name="Clark S.Y."/>
            <person name="Clark G."/>
            <person name="Clee C.M."/>
            <person name="Clegg S."/>
            <person name="Cobley V."/>
            <person name="Collier R.E."/>
            <person name="Collins J.E."/>
            <person name="Colman L.K."/>
            <person name="Corby N.R."/>
            <person name="Coville G.J."/>
            <person name="Culley K.M."/>
            <person name="Dhami P."/>
            <person name="Davies J."/>
            <person name="Dunn M."/>
            <person name="Earthrowl M.E."/>
            <person name="Ellington A.E."/>
            <person name="Evans K.A."/>
            <person name="Faulkner L."/>
            <person name="Francis M.D."/>
            <person name="Frankish A."/>
            <person name="Frankland J."/>
            <person name="French L."/>
            <person name="Garner P."/>
            <person name="Garnett J."/>
            <person name="Ghori M.J."/>
            <person name="Gilby L.M."/>
            <person name="Gillson C.J."/>
            <person name="Glithero R.J."/>
            <person name="Grafham D.V."/>
            <person name="Grant M."/>
            <person name="Gribble S."/>
            <person name="Griffiths C."/>
            <person name="Griffiths M.N.D."/>
            <person name="Hall R."/>
            <person name="Halls K.S."/>
            <person name="Hammond S."/>
            <person name="Harley J.L."/>
            <person name="Hart E.A."/>
            <person name="Heath P.D."/>
            <person name="Heathcott R."/>
            <person name="Holmes S.J."/>
            <person name="Howden P.J."/>
            <person name="Howe K.L."/>
            <person name="Howell G.R."/>
            <person name="Huckle E."/>
            <person name="Humphray S.J."/>
            <person name="Humphries M.D."/>
            <person name="Hunt A.R."/>
            <person name="Johnson C.M."/>
            <person name="Joy A.A."/>
            <person name="Kay M."/>
            <person name="Keenan S.J."/>
            <person name="Kimberley A.M."/>
            <person name="King A."/>
            <person name="Laird G.K."/>
            <person name="Langford C."/>
            <person name="Lawlor S."/>
            <person name="Leongamornlert D.A."/>
            <person name="Leversha M."/>
            <person name="Lloyd C.R."/>
            <person name="Lloyd D.M."/>
            <person name="Loveland J.E."/>
            <person name="Lovell J."/>
            <person name="Martin S."/>
            <person name="Mashreghi-Mohammadi M."/>
            <person name="Maslen G.L."/>
            <person name="Matthews L."/>
            <person name="McCann O.T."/>
            <person name="McLaren S.J."/>
            <person name="McLay K."/>
            <person name="McMurray A."/>
            <person name="Moore M.J.F."/>
            <person name="Mullikin J.C."/>
            <person name="Niblett D."/>
            <person name="Nickerson T."/>
            <person name="Novik K.L."/>
            <person name="Oliver K."/>
            <person name="Overton-Larty E.K."/>
            <person name="Parker A."/>
            <person name="Patel R."/>
            <person name="Pearce A.V."/>
            <person name="Peck A.I."/>
            <person name="Phillimore B.J.C.T."/>
            <person name="Phillips S."/>
            <person name="Plumb R.W."/>
            <person name="Porter K.M."/>
            <person name="Ramsey Y."/>
            <person name="Ranby S.A."/>
            <person name="Rice C.M."/>
            <person name="Ross M.T."/>
            <person name="Searle S.M."/>
            <person name="Sehra H.K."/>
            <person name="Sheridan E."/>
            <person name="Skuce C.D."/>
            <person name="Smith S."/>
            <person name="Smith M."/>
            <person name="Spraggon L."/>
            <person name="Squares S.L."/>
            <person name="Steward C.A."/>
            <person name="Sycamore N."/>
            <person name="Tamlyn-Hall G."/>
            <person name="Tester J."/>
            <person name="Theaker A.J."/>
            <person name="Thomas D.W."/>
            <person name="Thorpe A."/>
            <person name="Tracey A."/>
            <person name="Tromans A."/>
            <person name="Tubby B."/>
            <person name="Wall M."/>
            <person name="Wallis J.M."/>
            <person name="West A.P."/>
            <person name="White S.S."/>
            <person name="Whitehead S.L."/>
            <person name="Whittaker H."/>
            <person name="Wild A."/>
            <person name="Willey D.J."/>
            <person name="Wilmer T.E."/>
            <person name="Wood J.M."/>
            <person name="Wray P.W."/>
            <person name="Wyatt J.C."/>
            <person name="Young L."/>
            <person name="Younger R.M."/>
            <person name="Bentley D.R."/>
            <person name="Coulson A."/>
            <person name="Durbin R.M."/>
            <person name="Hubbard T."/>
            <person name="Sulston J.E."/>
            <person name="Dunham I."/>
            <person name="Rogers J."/>
            <person name="Beck S."/>
        </authorList>
    </citation>
    <scope>NUCLEOTIDE SEQUENCE [LARGE SCALE GENOMIC DNA]</scope>
</reference>
<reference key="5">
    <citation type="journal article" date="1990" name="Proc. Natl. Acad. Sci. U.S.A.">
        <title>Two genes encode factors with NF-kappa B- and H2TF1-like DNA-binding properties.</title>
        <authorList>
            <person name="Rustgi A.K."/>
            <person name="Van't Veer L.J."/>
            <person name="Bernards R."/>
        </authorList>
    </citation>
    <scope>NUCLEOTIDE SEQUENCE [MRNA] OF 1797-1936</scope>
</reference>
<reference key="6">
    <citation type="journal article" date="1999" name="Mol. Cell. Biol.">
        <title>Activation of somatostatin receptor II expression by transcription factors MIBP1 and SEF-2 in the murine brain.</title>
        <authorList>
            <person name="Doerflinger U."/>
            <person name="Pscherer A."/>
            <person name="Moser M."/>
            <person name="Ruemmele P."/>
            <person name="Schuele R."/>
            <person name="Buettner R."/>
        </authorList>
    </citation>
    <scope>TISSUE SPECIFICITY</scope>
    <source>
        <tissue>Brain</tissue>
    </source>
</reference>
<reference key="7">
    <citation type="journal article" date="2009" name="Sci. Signal.">
        <title>Quantitative phosphoproteomic analysis of T cell receptor signaling reveals system-wide modulation of protein-protein interactions.</title>
        <authorList>
            <person name="Mayya V."/>
            <person name="Lundgren D.H."/>
            <person name="Hwang S.-I."/>
            <person name="Rezaul K."/>
            <person name="Wu L."/>
            <person name="Eng J.K."/>
            <person name="Rodionov V."/>
            <person name="Han D.K."/>
        </authorList>
    </citation>
    <scope>IDENTIFICATION BY MASS SPECTROMETRY [LARGE SCALE ANALYSIS]</scope>
    <source>
        <tissue>Leukemic T-cell</tissue>
    </source>
</reference>
<reference key="8">
    <citation type="journal article" date="2012" name="Lancet">
        <title>Range of genetic mutations associated with severe non-syndromic sporadic intellectual disability: an exome sequencing study.</title>
        <authorList>
            <person name="Rauch A."/>
            <person name="Wieczorek D."/>
            <person name="Graf E."/>
            <person name="Wieland T."/>
            <person name="Endele S."/>
            <person name="Schwarzmayr T."/>
            <person name="Albrecht B."/>
            <person name="Bartholdi D."/>
            <person name="Beygo J."/>
            <person name="Di Donato N."/>
            <person name="Dufke A."/>
            <person name="Cremer K."/>
            <person name="Hempel M."/>
            <person name="Horn D."/>
            <person name="Hoyer J."/>
            <person name="Joset P."/>
            <person name="Roepke A."/>
            <person name="Moog U."/>
            <person name="Riess A."/>
            <person name="Thiel C.T."/>
            <person name="Tzschach A."/>
            <person name="Wiesener A."/>
            <person name="Wohlleber E."/>
            <person name="Zweier C."/>
            <person name="Ekici A.B."/>
            <person name="Zink A.M."/>
            <person name="Rump A."/>
            <person name="Meisinger C."/>
            <person name="Grallert H."/>
            <person name="Sticht H."/>
            <person name="Schenck A."/>
            <person name="Engels H."/>
            <person name="Rappold G."/>
            <person name="Schroeck E."/>
            <person name="Wieacker P."/>
            <person name="Riess O."/>
            <person name="Meitinger T."/>
            <person name="Reis A."/>
            <person name="Strom T.M."/>
        </authorList>
    </citation>
    <scope>INVOLVEMENT IN MRD43</scope>
</reference>
<reference key="9">
    <citation type="journal article" date="2012" name="Proc. Natl. Acad. Sci. U.S.A.">
        <title>N-terminal acetylome analyses and functional insights of the N-terminal acetyltransferase NatB.</title>
        <authorList>
            <person name="Van Damme P."/>
            <person name="Lasa M."/>
            <person name="Polevoda B."/>
            <person name="Gazquez C."/>
            <person name="Elosegui-Artola A."/>
            <person name="Kim D.S."/>
            <person name="De Juan-Pardo E."/>
            <person name="Demeyer K."/>
            <person name="Hole K."/>
            <person name="Larrea E."/>
            <person name="Timmerman E."/>
            <person name="Prieto J."/>
            <person name="Arnesen T."/>
            <person name="Sherman F."/>
            <person name="Gevaert K."/>
            <person name="Aldabe R."/>
        </authorList>
    </citation>
    <scope>IDENTIFICATION BY MASS SPECTROMETRY [LARGE SCALE ANALYSIS]</scope>
</reference>
<reference key="10">
    <citation type="journal article" date="2013" name="J. Proteome Res.">
        <title>Toward a comprehensive characterization of a human cancer cell phosphoproteome.</title>
        <authorList>
            <person name="Zhou H."/>
            <person name="Di Palma S."/>
            <person name="Preisinger C."/>
            <person name="Peng M."/>
            <person name="Polat A.N."/>
            <person name="Heck A.J."/>
            <person name="Mohammed S."/>
        </authorList>
    </citation>
    <scope>PHOSPHORYLATION [LARGE SCALE ANALYSIS] AT SER-2118; SER-2297 AND SER-2301</scope>
    <scope>IDENTIFICATION BY MASS SPECTROMETRY [LARGE SCALE ANALYSIS]</scope>
    <source>
        <tissue>Cervix carcinoma</tissue>
    </source>
</reference>
<reference key="11">
    <citation type="journal article" date="2016" name="Eur. J. Hum. Genet.">
        <title>Loss-of-function variants in HIVEP2 are a cause of intellectual disability.</title>
        <authorList>
            <person name="Srivastava S."/>
            <person name="Engels H."/>
            <person name="Schanze I."/>
            <person name="Cremer K."/>
            <person name="Wieland T."/>
            <person name="Menzel M."/>
            <person name="Schubach M."/>
            <person name="Biskup S."/>
            <person name="Kreiss M."/>
            <person name="Endele S."/>
            <person name="Strom T.M."/>
            <person name="Wieczorek D."/>
            <person name="Zenker M."/>
            <person name="Gupta S."/>
            <person name="Cohen J."/>
            <person name="Zink A.M."/>
            <person name="Naidu S."/>
        </authorList>
    </citation>
    <scope>INVOLVEMENT IN MRD43</scope>
</reference>
<organism>
    <name type="scientific">Homo sapiens</name>
    <name type="common">Human</name>
    <dbReference type="NCBI Taxonomy" id="9606"/>
    <lineage>
        <taxon>Eukaryota</taxon>
        <taxon>Metazoa</taxon>
        <taxon>Chordata</taxon>
        <taxon>Craniata</taxon>
        <taxon>Vertebrata</taxon>
        <taxon>Euteleostomi</taxon>
        <taxon>Mammalia</taxon>
        <taxon>Eutheria</taxon>
        <taxon>Euarchontoglires</taxon>
        <taxon>Primates</taxon>
        <taxon>Haplorrhini</taxon>
        <taxon>Catarrhini</taxon>
        <taxon>Hominidae</taxon>
        <taxon>Homo</taxon>
    </lineage>
</organism>
<accession>P31629</accession>
<accession>Q02646</accession>
<accession>Q5THT5</accession>
<accession>Q9NS05</accession>
<name>ZEP2_HUMAN</name>
<comment type="function">
    <text>This protein specifically binds to the DNA sequence 5'-GGGACTTTCC-3' which is found in the enhancer elements of numerous viral promoters such as those of SV40, CMV, or HIV1. In addition, related sequences are found in the enhancer elements of a number of cellular promoters, including those of the class I MHC, interleukin-2 receptor, somatostatin receptor II, and interferon-beta genes. It may act in T-cell activation.</text>
</comment>
<comment type="subunit">
    <text evidence="1">Interacts with TCF4.</text>
</comment>
<comment type="interaction">
    <interactant intactId="EBI-2514157">
        <id>P31629</id>
    </interactant>
    <interactant intactId="EBI-359832">
        <id>P61981</id>
        <label>YWHAG</label>
    </interactant>
    <organismsDiffer>false</organismsDiffer>
    <experiments>4</experiments>
</comment>
<comment type="subcellular location">
    <subcellularLocation>
        <location>Nucleus</location>
    </subcellularLocation>
</comment>
<comment type="tissue specificity">
    <text evidence="7">Expressed in brain and skeletal muscle.</text>
</comment>
<comment type="induction">
    <text>By mitogens and phorbol ester.</text>
</comment>
<comment type="disease" evidence="10 11">
    <disease id="DI-04747">
        <name>Intellectual developmental disorder, autosomal dominant 43</name>
        <acronym>MRD43</acronym>
        <description>A disorder characterized by significantly below average general intellectual functioning associated with impairments in adaptive behavior and manifested during the developmental period. MRD43 patients manifest developmental delay, intellectual disability, hypotonia, and dysmorphic features.</description>
        <dbReference type="MIM" id="616977"/>
    </disease>
    <text>The disease is caused by variants affecting the gene represented in this entry.</text>
</comment>
<comment type="sequence caution" evidence="13">
    <conflict type="erroneous initiation">
        <sequence resource="EMBL-CDS" id="AAB88218"/>
    </conflict>
</comment>
<comment type="sequence caution" evidence="13">
    <conflict type="erroneous initiation">
        <sequence resource="EMBL-CDS" id="CAA46596"/>
    </conflict>
</comment>
<gene>
    <name type="primary">HIVEP2</name>
</gene>
<keyword id="KW-0238">DNA-binding</keyword>
<keyword id="KW-0991">Intellectual disability</keyword>
<keyword id="KW-0479">Metal-binding</keyword>
<keyword id="KW-0539">Nucleus</keyword>
<keyword id="KW-0597">Phosphoprotein</keyword>
<keyword id="KW-1267">Proteomics identification</keyword>
<keyword id="KW-1185">Reference proteome</keyword>
<keyword id="KW-0677">Repeat</keyword>
<keyword id="KW-0804">Transcription</keyword>
<keyword id="KW-0805">Transcription regulation</keyword>
<keyword id="KW-0862">Zinc</keyword>
<keyword id="KW-0863">Zinc-finger</keyword>
<dbReference type="EMBL" id="M60119">
    <property type="protein sequence ID" value="AAB88218.1"/>
    <property type="status" value="ALT_INIT"/>
    <property type="molecule type" value="Genomic_DNA"/>
</dbReference>
<dbReference type="EMBL" id="X65644">
    <property type="protein sequence ID" value="CAA46596.1"/>
    <property type="status" value="ALT_INIT"/>
    <property type="molecule type" value="mRNA"/>
</dbReference>
<dbReference type="EMBL" id="AF153836">
    <property type="protein sequence ID" value="AAF81365.1"/>
    <property type="molecule type" value="Genomic_DNA"/>
</dbReference>
<dbReference type="EMBL" id="AL023584">
    <property type="status" value="NOT_ANNOTATED_CDS"/>
    <property type="molecule type" value="Genomic_DNA"/>
</dbReference>
<dbReference type="EMBL" id="M61744">
    <property type="protein sequence ID" value="AAA36202.1"/>
    <property type="molecule type" value="mRNA"/>
</dbReference>
<dbReference type="CCDS" id="CCDS43510.1"/>
<dbReference type="PIR" id="S26661">
    <property type="entry name" value="WMHUE2"/>
</dbReference>
<dbReference type="RefSeq" id="NP_006725.3">
    <property type="nucleotide sequence ID" value="NM_006734.3"/>
</dbReference>
<dbReference type="RefSeq" id="XP_016866294.1">
    <property type="nucleotide sequence ID" value="XM_017010805.1"/>
</dbReference>
<dbReference type="RefSeq" id="XP_024302185.1">
    <property type="nucleotide sequence ID" value="XM_024446417.2"/>
</dbReference>
<dbReference type="RefSeq" id="XP_024302186.1">
    <property type="nucleotide sequence ID" value="XM_024446418.2"/>
</dbReference>
<dbReference type="RefSeq" id="XP_024302187.1">
    <property type="nucleotide sequence ID" value="XM_024446419.2"/>
</dbReference>
<dbReference type="RefSeq" id="XP_047274663.1">
    <property type="nucleotide sequence ID" value="XM_047418707.1"/>
</dbReference>
<dbReference type="RefSeq" id="XP_047274664.1">
    <property type="nucleotide sequence ID" value="XM_047418708.1"/>
</dbReference>
<dbReference type="RefSeq" id="XP_047274665.1">
    <property type="nucleotide sequence ID" value="XM_047418709.1"/>
</dbReference>
<dbReference type="RefSeq" id="XP_047274666.1">
    <property type="nucleotide sequence ID" value="XM_047418710.1"/>
</dbReference>
<dbReference type="RefSeq" id="XP_047274667.1">
    <property type="nucleotide sequence ID" value="XM_047418711.1"/>
</dbReference>
<dbReference type="RefSeq" id="XP_047274668.1">
    <property type="nucleotide sequence ID" value="XM_047418712.1"/>
</dbReference>
<dbReference type="RefSeq" id="XP_047274669.1">
    <property type="nucleotide sequence ID" value="XM_047418713.1"/>
</dbReference>
<dbReference type="RefSeq" id="XP_047274670.1">
    <property type="nucleotide sequence ID" value="XM_047418714.1"/>
</dbReference>
<dbReference type="RefSeq" id="XP_047274671.1">
    <property type="nucleotide sequence ID" value="XM_047418715.1"/>
</dbReference>
<dbReference type="RefSeq" id="XP_047274672.1">
    <property type="nucleotide sequence ID" value="XM_047418716.1"/>
</dbReference>
<dbReference type="BioGRID" id="109344">
    <property type="interactions" value="28"/>
</dbReference>
<dbReference type="FunCoup" id="P31629">
    <property type="interactions" value="2549"/>
</dbReference>
<dbReference type="IntAct" id="P31629">
    <property type="interactions" value="24"/>
</dbReference>
<dbReference type="STRING" id="9606.ENSP00000356576"/>
<dbReference type="ChEMBL" id="CHEMBL4523214"/>
<dbReference type="GlyCosmos" id="P31629">
    <property type="glycosylation" value="23 sites, 2 glycans"/>
</dbReference>
<dbReference type="GlyGen" id="P31629">
    <property type="glycosylation" value="37 sites, 2 O-linked glycans (36 sites)"/>
</dbReference>
<dbReference type="iPTMnet" id="P31629"/>
<dbReference type="PhosphoSitePlus" id="P31629"/>
<dbReference type="BioMuta" id="HIVEP2"/>
<dbReference type="DMDM" id="83305815"/>
<dbReference type="jPOST" id="P31629"/>
<dbReference type="MassIVE" id="P31629"/>
<dbReference type="PaxDb" id="9606-ENSP00000356575"/>
<dbReference type="PeptideAtlas" id="P31629"/>
<dbReference type="ProteomicsDB" id="54794"/>
<dbReference type="Pumba" id="P31629"/>
<dbReference type="Antibodypedia" id="46676">
    <property type="antibodies" value="41 antibodies from 17 providers"/>
</dbReference>
<dbReference type="DNASU" id="3097"/>
<dbReference type="Ensembl" id="ENST00000012134.7">
    <property type="protein sequence ID" value="ENSP00000012134.2"/>
    <property type="gene ID" value="ENSG00000010818.11"/>
</dbReference>
<dbReference type="Ensembl" id="ENST00000367603.8">
    <property type="protein sequence ID" value="ENSP00000356575.2"/>
    <property type="gene ID" value="ENSG00000010818.11"/>
</dbReference>
<dbReference type="Ensembl" id="ENST00000367604.6">
    <property type="protein sequence ID" value="ENSP00000356576.1"/>
    <property type="gene ID" value="ENSG00000010818.11"/>
</dbReference>
<dbReference type="Ensembl" id="ENST00000703918.1">
    <property type="protein sequence ID" value="ENSP00000515552.1"/>
    <property type="gene ID" value="ENSG00000010818.11"/>
</dbReference>
<dbReference type="GeneID" id="3097"/>
<dbReference type="KEGG" id="hsa:3097"/>
<dbReference type="MANE-Select" id="ENST00000367603.8">
    <property type="protein sequence ID" value="ENSP00000356575.2"/>
    <property type="RefSeq nucleotide sequence ID" value="NM_006734.4"/>
    <property type="RefSeq protein sequence ID" value="NP_006725.3"/>
</dbReference>
<dbReference type="UCSC" id="uc003qjd.4">
    <property type="organism name" value="human"/>
</dbReference>
<dbReference type="AGR" id="HGNC:4921"/>
<dbReference type="CTD" id="3097"/>
<dbReference type="DisGeNET" id="3097"/>
<dbReference type="GeneCards" id="HIVEP2"/>
<dbReference type="HGNC" id="HGNC:4921">
    <property type="gene designation" value="HIVEP2"/>
</dbReference>
<dbReference type="HPA" id="ENSG00000010818">
    <property type="expression patterns" value="Low tissue specificity"/>
</dbReference>
<dbReference type="MalaCards" id="HIVEP2"/>
<dbReference type="MIM" id="143054">
    <property type="type" value="gene"/>
</dbReference>
<dbReference type="MIM" id="616977">
    <property type="type" value="phenotype"/>
</dbReference>
<dbReference type="neXtProt" id="NX_P31629"/>
<dbReference type="OpenTargets" id="ENSG00000010818"/>
<dbReference type="Orphanet" id="178469">
    <property type="disease" value="Autosomal dominant non-syndromic intellectual disability"/>
</dbReference>
<dbReference type="PharmGKB" id="PA29298"/>
<dbReference type="VEuPathDB" id="HostDB:ENSG00000010818"/>
<dbReference type="eggNOG" id="KOG1721">
    <property type="taxonomic scope" value="Eukaryota"/>
</dbReference>
<dbReference type="GeneTree" id="ENSGT00940000156512"/>
<dbReference type="HOGENOM" id="CLU_000719_0_0_1"/>
<dbReference type="InParanoid" id="P31629"/>
<dbReference type="OMA" id="EHHGRMS"/>
<dbReference type="OrthoDB" id="10042249at2759"/>
<dbReference type="PAN-GO" id="P31629">
    <property type="GO annotations" value="4 GO annotations based on evolutionary models"/>
</dbReference>
<dbReference type="PhylomeDB" id="P31629"/>
<dbReference type="TreeFam" id="TF331837"/>
<dbReference type="PathwayCommons" id="P31629"/>
<dbReference type="SignaLink" id="P31629"/>
<dbReference type="SIGNOR" id="P31629"/>
<dbReference type="BioGRID-ORCS" id="3097">
    <property type="hits" value="10 hits in 1175 CRISPR screens"/>
</dbReference>
<dbReference type="ChiTaRS" id="HIVEP2">
    <property type="organism name" value="human"/>
</dbReference>
<dbReference type="GeneWiki" id="HIVEP2"/>
<dbReference type="GenomeRNAi" id="3097"/>
<dbReference type="Pharos" id="P31629">
    <property type="development level" value="Tbio"/>
</dbReference>
<dbReference type="PRO" id="PR:P31629"/>
<dbReference type="Proteomes" id="UP000005640">
    <property type="component" value="Chromosome 6"/>
</dbReference>
<dbReference type="RNAct" id="P31629">
    <property type="molecule type" value="protein"/>
</dbReference>
<dbReference type="Bgee" id="ENSG00000010818">
    <property type="expression patterns" value="Expressed in tendon of biceps brachii and 215 other cell types or tissues"/>
</dbReference>
<dbReference type="GO" id="GO:0005654">
    <property type="term" value="C:nucleoplasm"/>
    <property type="evidence" value="ECO:0000314"/>
    <property type="project" value="HPA"/>
</dbReference>
<dbReference type="GO" id="GO:0005634">
    <property type="term" value="C:nucleus"/>
    <property type="evidence" value="ECO:0000318"/>
    <property type="project" value="GO_Central"/>
</dbReference>
<dbReference type="GO" id="GO:0003677">
    <property type="term" value="F:DNA binding"/>
    <property type="evidence" value="ECO:0000304"/>
    <property type="project" value="UniProtKB"/>
</dbReference>
<dbReference type="GO" id="GO:0000981">
    <property type="term" value="F:DNA-binding transcription factor activity, RNA polymerase II-specific"/>
    <property type="evidence" value="ECO:0000318"/>
    <property type="project" value="GO_Central"/>
</dbReference>
<dbReference type="GO" id="GO:0000978">
    <property type="term" value="F:RNA polymerase II cis-regulatory region sequence-specific DNA binding"/>
    <property type="evidence" value="ECO:0000318"/>
    <property type="project" value="GO_Central"/>
</dbReference>
<dbReference type="GO" id="GO:0008270">
    <property type="term" value="F:zinc ion binding"/>
    <property type="evidence" value="ECO:0007669"/>
    <property type="project" value="UniProtKB-KW"/>
</dbReference>
<dbReference type="GO" id="GO:0006357">
    <property type="term" value="P:regulation of transcription by RNA polymerase II"/>
    <property type="evidence" value="ECO:0000318"/>
    <property type="project" value="GO_Central"/>
</dbReference>
<dbReference type="FunFam" id="3.30.160.60:FF:000033">
    <property type="entry name" value="Immunodeficiency virus type I enhancer binding protein 1"/>
    <property type="match status" value="2"/>
</dbReference>
<dbReference type="FunFam" id="3.30.160.60:FF:000594">
    <property type="entry name" value="Transcription factor HIVEP2"/>
    <property type="match status" value="1"/>
</dbReference>
<dbReference type="Gene3D" id="3.30.160.60">
    <property type="entry name" value="Classic Zinc Finger"/>
    <property type="match status" value="4"/>
</dbReference>
<dbReference type="InterPro" id="IPR051969">
    <property type="entry name" value="Zinc-finger_DNA-bd_regulators"/>
</dbReference>
<dbReference type="InterPro" id="IPR036236">
    <property type="entry name" value="Znf_C2H2_sf"/>
</dbReference>
<dbReference type="InterPro" id="IPR013087">
    <property type="entry name" value="Znf_C2H2_type"/>
</dbReference>
<dbReference type="PANTHER" id="PTHR45944">
    <property type="entry name" value="SCHNURRI, ISOFORM F"/>
    <property type="match status" value="1"/>
</dbReference>
<dbReference type="PANTHER" id="PTHR45944:SF1">
    <property type="entry name" value="TRANSCRIPTION FACTOR HIVEP2"/>
    <property type="match status" value="1"/>
</dbReference>
<dbReference type="Pfam" id="PF00096">
    <property type="entry name" value="zf-C2H2"/>
    <property type="match status" value="3"/>
</dbReference>
<dbReference type="SMART" id="SM00355">
    <property type="entry name" value="ZnF_C2H2"/>
    <property type="match status" value="4"/>
</dbReference>
<dbReference type="SUPFAM" id="SSF57667">
    <property type="entry name" value="beta-beta-alpha zinc fingers"/>
    <property type="match status" value="2"/>
</dbReference>
<dbReference type="PROSITE" id="PS00028">
    <property type="entry name" value="ZINC_FINGER_C2H2_1"/>
    <property type="match status" value="4"/>
</dbReference>
<dbReference type="PROSITE" id="PS50157">
    <property type="entry name" value="ZINC_FINGER_C2H2_2"/>
    <property type="match status" value="4"/>
</dbReference>
<evidence type="ECO:0000250" key="1"/>
<evidence type="ECO:0000250" key="2">
    <source>
        <dbReference type="UniProtKB" id="Q00900"/>
    </source>
</evidence>
<evidence type="ECO:0000250" key="3">
    <source>
        <dbReference type="UniProtKB" id="Q3UHF7"/>
    </source>
</evidence>
<evidence type="ECO:0000255" key="4"/>
<evidence type="ECO:0000255" key="5">
    <source>
        <dbReference type="PROSITE-ProRule" id="PRU00042"/>
    </source>
</evidence>
<evidence type="ECO:0000256" key="6">
    <source>
        <dbReference type="SAM" id="MobiDB-lite"/>
    </source>
</evidence>
<evidence type="ECO:0000269" key="7">
    <source>
    </source>
</evidence>
<evidence type="ECO:0000269" key="8">
    <source>
    </source>
</evidence>
<evidence type="ECO:0000269" key="9">
    <source>
    </source>
</evidence>
<evidence type="ECO:0000269" key="10">
    <source>
    </source>
</evidence>
<evidence type="ECO:0000269" key="11">
    <source>
    </source>
</evidence>
<evidence type="ECO:0000269" key="12">
    <source ref="3"/>
</evidence>
<evidence type="ECO:0000305" key="13"/>
<evidence type="ECO:0007744" key="14">
    <source>
    </source>
</evidence>